<dbReference type="EMBL" id="FR728681">
    <property type="protein sequence ID" value="CBY17558.1"/>
    <property type="molecule type" value="mRNA"/>
</dbReference>
<dbReference type="SMR" id="P86704"/>
<dbReference type="Allergome" id="1277">
    <property type="allergen name" value="Pan b 1"/>
</dbReference>
<dbReference type="Allergome" id="9076">
    <property type="allergen name" value="Pan b 1.0101"/>
</dbReference>
<dbReference type="FunFam" id="1.20.5.170:FF:000005">
    <property type="entry name" value="Tropomyosin alpha-1 chain"/>
    <property type="match status" value="1"/>
</dbReference>
<dbReference type="FunFam" id="1.20.5.170:FF:000001">
    <property type="entry name" value="Tropomyosin alpha-1 chain isoform 1"/>
    <property type="match status" value="1"/>
</dbReference>
<dbReference type="FunFam" id="1.20.5.340:FF:000001">
    <property type="entry name" value="Tropomyosin alpha-1 chain isoform 2"/>
    <property type="match status" value="1"/>
</dbReference>
<dbReference type="Gene3D" id="1.20.5.170">
    <property type="match status" value="2"/>
</dbReference>
<dbReference type="Gene3D" id="1.20.5.340">
    <property type="match status" value="1"/>
</dbReference>
<dbReference type="InterPro" id="IPR000533">
    <property type="entry name" value="Tropomyosin"/>
</dbReference>
<dbReference type="PANTHER" id="PTHR19269">
    <property type="entry name" value="TROPOMYOSIN"/>
    <property type="match status" value="1"/>
</dbReference>
<dbReference type="Pfam" id="PF00261">
    <property type="entry name" value="Tropomyosin"/>
    <property type="match status" value="1"/>
</dbReference>
<dbReference type="PRINTS" id="PR00194">
    <property type="entry name" value="TROPOMYOSIN"/>
</dbReference>
<dbReference type="SUPFAM" id="SSF57997">
    <property type="entry name" value="Tropomyosin"/>
    <property type="match status" value="1"/>
</dbReference>
<dbReference type="PROSITE" id="PS00326">
    <property type="entry name" value="TROPOMYOSIN"/>
    <property type="match status" value="1"/>
</dbReference>
<keyword id="KW-0007">Acetylation</keyword>
<keyword id="KW-0020">Allergen</keyword>
<keyword id="KW-0175">Coiled coil</keyword>
<keyword id="KW-0903">Direct protein sequencing</keyword>
<keyword id="KW-0677">Repeat</keyword>
<accession>P86704</accession>
<accession>E5BBS3</accession>
<name>TPM_PANBO</name>
<proteinExistence type="evidence at protein level"/>
<gene>
    <name evidence="2" type="primary">TM1</name>
</gene>
<evidence type="ECO:0000250" key="1">
    <source>
        <dbReference type="UniProtKB" id="A2V735"/>
    </source>
</evidence>
<evidence type="ECO:0000250" key="2">
    <source>
        <dbReference type="UniProtKB" id="O44119"/>
    </source>
</evidence>
<evidence type="ECO:0000250" key="3">
    <source>
        <dbReference type="UniProtKB" id="Q22866"/>
    </source>
</evidence>
<evidence type="ECO:0000255" key="4"/>
<evidence type="ECO:0000256" key="5">
    <source>
        <dbReference type="SAM" id="MobiDB-lite"/>
    </source>
</evidence>
<evidence type="ECO:0000269" key="6">
    <source>
    </source>
</evidence>
<evidence type="ECO:0000269" key="7">
    <source ref="2"/>
</evidence>
<evidence type="ECO:0000303" key="8">
    <source>
    </source>
</evidence>
<evidence type="ECO:0000305" key="9"/>
<evidence type="ECO:0000312" key="10">
    <source>
        <dbReference type="EMBL" id="CBY17558.1"/>
    </source>
</evidence>
<reference evidence="10" key="1">
    <citation type="journal article" date="2013" name="Int. Arch. Allergy Immunol.">
        <title>Structural and Immunological Characterization of Recombinant Pan b 1, a Major Allergen of Northern Shrimp, Pandalus borealis.</title>
        <authorList>
            <person name="Myrset H.R."/>
            <person name="Barletta B."/>
            <person name="Di Felice G."/>
            <person name="Egaas E."/>
            <person name="Dooper M.M.B.W."/>
        </authorList>
    </citation>
    <scope>NUCLEOTIDE SEQUENCE [MRNA]</scope>
    <scope>ALLERGEN</scope>
    <scope>MASS SPECTROMETRY</scope>
    <source>
        <tissue evidence="10">Tail muscle</tissue>
    </source>
</reference>
<reference evidence="9" key="2">
    <citation type="submission" date="2010-07" db="UniProtKB">
        <authorList>
            <person name="Abdel Rahman A.M."/>
            <person name="Kamath S."/>
            <person name="Robinson J.J."/>
            <person name="Lopata A.L."/>
            <person name="Helleur R.J."/>
        </authorList>
    </citation>
    <scope>PROTEIN SEQUENCE</scope>
    <scope>ACETYLATION AT MET-1</scope>
</reference>
<protein>
    <recommendedName>
        <fullName evidence="8">Tropomyosin</fullName>
    </recommendedName>
    <allergenName evidence="8">Pan b 1</allergenName>
</protein>
<organism>
    <name type="scientific">Pandalus borealis</name>
    <name type="common">Northern red shrimp</name>
    <dbReference type="NCBI Taxonomy" id="6703"/>
    <lineage>
        <taxon>Eukaryota</taxon>
        <taxon>Metazoa</taxon>
        <taxon>Ecdysozoa</taxon>
        <taxon>Arthropoda</taxon>
        <taxon>Crustacea</taxon>
        <taxon>Multicrustacea</taxon>
        <taxon>Malacostraca</taxon>
        <taxon>Eumalacostraca</taxon>
        <taxon>Eucarida</taxon>
        <taxon>Decapoda</taxon>
        <taxon>Pleocyemata</taxon>
        <taxon>Caridea</taxon>
        <taxon>Pandaloidea</taxon>
        <taxon>Pandalidae</taxon>
        <taxon>Pandalus</taxon>
    </lineage>
</organism>
<feature type="chain" id="PRO_0000413031" description="Tropomyosin">
    <location>
        <begin position="1"/>
        <end position="284"/>
    </location>
</feature>
<feature type="region of interest" description="Disordered" evidence="5">
    <location>
        <begin position="1"/>
        <end position="42"/>
    </location>
</feature>
<feature type="coiled-coil region" evidence="2">
    <location>
        <begin position="1"/>
        <end position="284"/>
    </location>
</feature>
<feature type="compositionally biased region" description="Basic and acidic residues" evidence="5">
    <location>
        <begin position="12"/>
        <end position="38"/>
    </location>
</feature>
<feature type="modified residue" description="N-acetylmethionine" evidence="7">
    <location>
        <position position="1"/>
    </location>
</feature>
<comment type="function">
    <text evidence="3">Tropomyosin, in association with the troponin complex, plays a central role in the calcium dependent regulation of muscle contraction.</text>
</comment>
<comment type="subunit">
    <text evidence="1">Homodimer.</text>
</comment>
<comment type="domain">
    <text evidence="9">The molecule is in a coiled coil structure that is formed by 2 polypeptide chains. The sequence exhibits a prominent seven-residues periodicity.</text>
</comment>
<comment type="mass spectrometry" mass="32756.0" method="MALDI" evidence="6"/>
<comment type="allergen">
    <text evidence="6">Causes an allergic reaction in human. Binds to IgE.</text>
</comment>
<comment type="similarity">
    <text evidence="4">Belongs to the tropomyosin family.</text>
</comment>
<sequence length="284" mass="32753">MDAIKKKMQAMKLEKDNAMDRADTLEQQNKEANNRAEKSEEEVFGLQKKLQQLENDLDSVQEALLKANQHLEEKDKALSNAEGEVAALNRRIQLLEEDLERSEERLNTATTKLAEASQAADESERMRKVLENRSLSDEERMDALENQLKEARFLAEEADRKYDEVARKLAMVEADLERAEERAETGESKIVELEEELRVVGNNLKSLEVSEEKANQREEAYKEQIKTLTNKLKAAEARAEFAERSVQKLQKEVDRLEDELVNEKEKYKSITDELDQTFSELSGY</sequence>